<protein>
    <recommendedName>
        <fullName evidence="1">NADH-quinone oxidoreductase subunit H</fullName>
        <ecNumber evidence="1">7.1.1.-</ecNumber>
    </recommendedName>
    <alternativeName>
        <fullName evidence="1">NADH dehydrogenase I subunit H</fullName>
    </alternativeName>
    <alternativeName>
        <fullName evidence="1">NDH-1 subunit H</fullName>
    </alternativeName>
</protein>
<proteinExistence type="inferred from homology"/>
<dbReference type="EC" id="7.1.1.-" evidence="1"/>
<dbReference type="EMBL" id="CP000084">
    <property type="protein sequence ID" value="AAZ21705.1"/>
    <property type="molecule type" value="Genomic_DNA"/>
</dbReference>
<dbReference type="RefSeq" id="WP_011282017.1">
    <property type="nucleotide sequence ID" value="NC_007205.1"/>
</dbReference>
<dbReference type="SMR" id="Q4FM84"/>
<dbReference type="STRING" id="335992.SAR11_0890"/>
<dbReference type="GeneID" id="66295385"/>
<dbReference type="KEGG" id="pub:SAR11_0890"/>
<dbReference type="eggNOG" id="COG1005">
    <property type="taxonomic scope" value="Bacteria"/>
</dbReference>
<dbReference type="HOGENOM" id="CLU_015134_0_1_5"/>
<dbReference type="OrthoDB" id="9803734at2"/>
<dbReference type="Proteomes" id="UP000002528">
    <property type="component" value="Chromosome"/>
</dbReference>
<dbReference type="GO" id="GO:0005886">
    <property type="term" value="C:plasma membrane"/>
    <property type="evidence" value="ECO:0007669"/>
    <property type="project" value="UniProtKB-SubCell"/>
</dbReference>
<dbReference type="GO" id="GO:0003954">
    <property type="term" value="F:NADH dehydrogenase activity"/>
    <property type="evidence" value="ECO:0007669"/>
    <property type="project" value="TreeGrafter"/>
</dbReference>
<dbReference type="GO" id="GO:0016655">
    <property type="term" value="F:oxidoreductase activity, acting on NAD(P)H, quinone or similar compound as acceptor"/>
    <property type="evidence" value="ECO:0007669"/>
    <property type="project" value="UniProtKB-UniRule"/>
</dbReference>
<dbReference type="GO" id="GO:0048038">
    <property type="term" value="F:quinone binding"/>
    <property type="evidence" value="ECO:0007669"/>
    <property type="project" value="UniProtKB-KW"/>
</dbReference>
<dbReference type="GO" id="GO:0009060">
    <property type="term" value="P:aerobic respiration"/>
    <property type="evidence" value="ECO:0007669"/>
    <property type="project" value="TreeGrafter"/>
</dbReference>
<dbReference type="HAMAP" id="MF_01350">
    <property type="entry name" value="NDH1_NuoH"/>
    <property type="match status" value="1"/>
</dbReference>
<dbReference type="InterPro" id="IPR001694">
    <property type="entry name" value="NADH_UbQ_OxRdtase_su1/FPO"/>
</dbReference>
<dbReference type="InterPro" id="IPR018086">
    <property type="entry name" value="NADH_UbQ_OxRdtase_su1_CS"/>
</dbReference>
<dbReference type="NCBIfam" id="NF004741">
    <property type="entry name" value="PRK06076.1-2"/>
    <property type="match status" value="1"/>
</dbReference>
<dbReference type="NCBIfam" id="NF004745">
    <property type="entry name" value="PRK06076.1-6"/>
    <property type="match status" value="1"/>
</dbReference>
<dbReference type="PANTHER" id="PTHR11432">
    <property type="entry name" value="NADH DEHYDROGENASE SUBUNIT 1"/>
    <property type="match status" value="1"/>
</dbReference>
<dbReference type="PANTHER" id="PTHR11432:SF3">
    <property type="entry name" value="NADH-UBIQUINONE OXIDOREDUCTASE CHAIN 1"/>
    <property type="match status" value="1"/>
</dbReference>
<dbReference type="Pfam" id="PF00146">
    <property type="entry name" value="NADHdh"/>
    <property type="match status" value="1"/>
</dbReference>
<dbReference type="PROSITE" id="PS00667">
    <property type="entry name" value="COMPLEX1_ND1_1"/>
    <property type="match status" value="1"/>
</dbReference>
<dbReference type="PROSITE" id="PS00668">
    <property type="entry name" value="COMPLEX1_ND1_2"/>
    <property type="match status" value="1"/>
</dbReference>
<reference key="1">
    <citation type="journal article" date="2005" name="Science">
        <title>Genome streamlining in a cosmopolitan oceanic bacterium.</title>
        <authorList>
            <person name="Giovannoni S.J."/>
            <person name="Tripp H.J."/>
            <person name="Givan S."/>
            <person name="Podar M."/>
            <person name="Vergin K.L."/>
            <person name="Baptista D."/>
            <person name="Bibbs L."/>
            <person name="Eads J."/>
            <person name="Richardson T.H."/>
            <person name="Noordewier M."/>
            <person name="Rappe M.S."/>
            <person name="Short J.M."/>
            <person name="Carrington J.C."/>
            <person name="Mathur E.J."/>
        </authorList>
    </citation>
    <scope>NUCLEOTIDE SEQUENCE [LARGE SCALE GENOMIC DNA]</scope>
    <source>
        <strain>HTCC1062</strain>
    </source>
</reference>
<feature type="chain" id="PRO_0000240095" description="NADH-quinone oxidoreductase subunit H">
    <location>
        <begin position="1"/>
        <end position="332"/>
    </location>
</feature>
<feature type="transmembrane region" description="Helical" evidence="1">
    <location>
        <begin position="11"/>
        <end position="31"/>
    </location>
</feature>
<feature type="transmembrane region" description="Helical" evidence="1">
    <location>
        <begin position="77"/>
        <end position="97"/>
    </location>
</feature>
<feature type="transmembrane region" description="Helical" evidence="1">
    <location>
        <begin position="110"/>
        <end position="130"/>
    </location>
</feature>
<feature type="transmembrane region" description="Helical" evidence="1">
    <location>
        <begin position="156"/>
        <end position="176"/>
    </location>
</feature>
<feature type="transmembrane region" description="Helical" evidence="1">
    <location>
        <begin position="182"/>
        <end position="202"/>
    </location>
</feature>
<feature type="transmembrane region" description="Helical" evidence="1">
    <location>
        <begin position="240"/>
        <end position="260"/>
    </location>
</feature>
<feature type="transmembrane region" description="Helical" evidence="1">
    <location>
        <begin position="268"/>
        <end position="288"/>
    </location>
</feature>
<feature type="transmembrane region" description="Helical" evidence="1">
    <location>
        <begin position="307"/>
        <end position="327"/>
    </location>
</feature>
<sequence length="332" mass="37447">MEYLNIIFLQTYKILFLLVPVLVSVAMIVWLDRRIWAFVQKRQGPNVVGPFGLLQSLADALKYIFKEVIIPSSSNKVIFILAPIVTMTLALVSWAVIPFSTTQVLADINVGVLYLFAVSSLGVYGIIMGGWASNSKYPFLGAIRSAAQMVSYEVSIGVIIINVLLCVGSLNLNDIIMAQENLWFIIPLFPMFVIFFISALAETNRPPFDLPEAEAELVAGYQTEYSGMMYAMFWLGEYANILLMCAMGSILFLGGWLSPIDLYPFNLIPGAIWMIFKILFLFVLFALVKAVVPRYRYDQLMRLGWKIFLPLSLTWVVLTASYLFYFNLLPVN</sequence>
<name>NUOH_PELUB</name>
<evidence type="ECO:0000255" key="1">
    <source>
        <dbReference type="HAMAP-Rule" id="MF_01350"/>
    </source>
</evidence>
<gene>
    <name evidence="1" type="primary">nuoH</name>
    <name type="ordered locus">SAR11_0890</name>
</gene>
<keyword id="KW-0997">Cell inner membrane</keyword>
<keyword id="KW-1003">Cell membrane</keyword>
<keyword id="KW-0472">Membrane</keyword>
<keyword id="KW-0520">NAD</keyword>
<keyword id="KW-0874">Quinone</keyword>
<keyword id="KW-1185">Reference proteome</keyword>
<keyword id="KW-1278">Translocase</keyword>
<keyword id="KW-0812">Transmembrane</keyword>
<keyword id="KW-1133">Transmembrane helix</keyword>
<keyword id="KW-0830">Ubiquinone</keyword>
<organism>
    <name type="scientific">Pelagibacter ubique (strain HTCC1062)</name>
    <dbReference type="NCBI Taxonomy" id="335992"/>
    <lineage>
        <taxon>Bacteria</taxon>
        <taxon>Pseudomonadati</taxon>
        <taxon>Pseudomonadota</taxon>
        <taxon>Alphaproteobacteria</taxon>
        <taxon>Candidatus Pelagibacterales</taxon>
        <taxon>Candidatus Pelagibacteraceae</taxon>
        <taxon>Candidatus Pelagibacter</taxon>
    </lineage>
</organism>
<accession>Q4FM84</accession>
<comment type="function">
    <text evidence="1">NDH-1 shuttles electrons from NADH, via FMN and iron-sulfur (Fe-S) centers, to quinones in the respiratory chain. The immediate electron acceptor for the enzyme in this species is believed to be ubiquinone. Couples the redox reaction to proton translocation (for every two electrons transferred, four hydrogen ions are translocated across the cytoplasmic membrane), and thus conserves the redox energy in a proton gradient. This subunit may bind ubiquinone.</text>
</comment>
<comment type="catalytic activity">
    <reaction evidence="1">
        <text>a quinone + NADH + 5 H(+)(in) = a quinol + NAD(+) + 4 H(+)(out)</text>
        <dbReference type="Rhea" id="RHEA:57888"/>
        <dbReference type="ChEBI" id="CHEBI:15378"/>
        <dbReference type="ChEBI" id="CHEBI:24646"/>
        <dbReference type="ChEBI" id="CHEBI:57540"/>
        <dbReference type="ChEBI" id="CHEBI:57945"/>
        <dbReference type="ChEBI" id="CHEBI:132124"/>
    </reaction>
</comment>
<comment type="subunit">
    <text evidence="1">NDH-1 is composed of 14 different subunits. Subunits NuoA, H, J, K, L, M, N constitute the membrane sector of the complex.</text>
</comment>
<comment type="subcellular location">
    <subcellularLocation>
        <location evidence="1">Cell inner membrane</location>
        <topology evidence="1">Multi-pass membrane protein</topology>
    </subcellularLocation>
</comment>
<comment type="similarity">
    <text evidence="1">Belongs to the complex I subunit 1 family.</text>
</comment>